<organism>
    <name type="scientific">Tityus serrulatus</name>
    <name type="common">Brazilian scorpion</name>
    <dbReference type="NCBI Taxonomy" id="6887"/>
    <lineage>
        <taxon>Eukaryota</taxon>
        <taxon>Metazoa</taxon>
        <taxon>Ecdysozoa</taxon>
        <taxon>Arthropoda</taxon>
        <taxon>Chelicerata</taxon>
        <taxon>Arachnida</taxon>
        <taxon>Scorpiones</taxon>
        <taxon>Buthida</taxon>
        <taxon>Buthoidea</taxon>
        <taxon>Buthidae</taxon>
        <taxon>Tityus</taxon>
    </lineage>
</organism>
<name>GLYR_TITSE</name>
<dbReference type="GO" id="GO:0005576">
    <property type="term" value="C:extracellular region"/>
    <property type="evidence" value="ECO:0007669"/>
    <property type="project" value="UniProtKB-SubCell"/>
</dbReference>
<dbReference type="GO" id="GO:0042742">
    <property type="term" value="P:defense response to bacterium"/>
    <property type="evidence" value="ECO:0007669"/>
    <property type="project" value="UniProtKB-KW"/>
</dbReference>
<dbReference type="GO" id="GO:0050832">
    <property type="term" value="P:defense response to fungus"/>
    <property type="evidence" value="ECO:0007669"/>
    <property type="project" value="UniProtKB-KW"/>
</dbReference>
<dbReference type="GO" id="GO:0045087">
    <property type="term" value="P:innate immune response"/>
    <property type="evidence" value="ECO:0007669"/>
    <property type="project" value="UniProtKB-KW"/>
</dbReference>
<dbReference type="GO" id="GO:0031640">
    <property type="term" value="P:killing of cells of another organism"/>
    <property type="evidence" value="ECO:0007669"/>
    <property type="project" value="UniProtKB-KW"/>
</dbReference>
<sequence length="37" mass="3048">GFGGGRGGFGGGRGGFGGGGIGGGGFGGGYGGGKIKG</sequence>
<evidence type="ECO:0000256" key="1">
    <source>
        <dbReference type="SAM" id="MobiDB-lite"/>
    </source>
</evidence>
<evidence type="ECO:0000269" key="2">
    <source>
    </source>
</evidence>
<evidence type="ECO:0000303" key="3">
    <source>
    </source>
</evidence>
<evidence type="ECO:0000305" key="4"/>
<evidence type="ECO:0000305" key="5">
    <source>
    </source>
</evidence>
<accession>P0DX63</accession>
<feature type="chain" id="PRO_0000459168" description="Serrulin" evidence="2">
    <location>
        <begin position="1" status="less than"/>
        <end position="36"/>
    </location>
</feature>
<feature type="region of interest" description="Disordered" evidence="1">
    <location>
        <begin position="16"/>
        <end position="37"/>
    </location>
</feature>
<feature type="modified residue" description="Lysine amide" evidence="2">
    <location>
        <position position="36"/>
    </location>
</feature>
<feature type="non-terminal residue" evidence="5">
    <location>
        <position position="1"/>
    </location>
</feature>
<protein>
    <recommendedName>
        <fullName evidence="3">Serrulin</fullName>
    </recommendedName>
</protein>
<comment type="function">
    <text evidence="2">Antimicrobial protein with activity against Gram-positive and Gram-negative bacteria, filamentous fungus, and yeast. Was tested against Micrococcus luteus A270 (MIC=0.5-1 uM), Echerichia coli SBS 363 (MIC=9-16 uM), Pseudomonas aeruginosa (MIC=0.01-0.3 uM), Aspergillus niger (MIC=3-6 uM), and Candida albicans MDM8 (MIC=1.5-3 uM). Has no hemolytic activity against human erythrocytes.</text>
</comment>
<comment type="subcellular location">
    <subcellularLocation>
        <location evidence="2">Secreted</location>
    </subcellularLocation>
</comment>
<comment type="tissue specificity">
    <text evidence="2">Expressed in hemocytes (at protein level).</text>
</comment>
<comment type="mass spectrometry" mass="3564.0" method="Electrospray" evidence="2"/>
<comment type="similarity">
    <text evidence="4">Belongs to the glycine-rich peptide family.</text>
</comment>
<proteinExistence type="evidence at protein level"/>
<reference key="1">
    <citation type="journal article" date="2019" name="Toxins">
        <title>Serrulin: a glycine-rich bioactive peptide from the hemolymph of the yellow Tityus serrulatus scorpion.</title>
        <authorList>
            <person name="de Jesus Oliveira T."/>
            <person name="Oliveira U.C."/>
            <person name="da Silva Junior P.I."/>
        </authorList>
    </citation>
    <scope>PROTEIN SEQUENCE</scope>
    <scope>MASS SPECTROMETRY</scope>
    <scope>SUBCELLULAR LOCATION</scope>
    <scope>TISSUE SPECIFICITY</scope>
    <scope>AMIDATION AT LYS-36</scope>
    <source>
        <tissue>Hemocyte</tissue>
    </source>
</reference>
<keyword id="KW-0027">Amidation</keyword>
<keyword id="KW-0044">Antibiotic</keyword>
<keyword id="KW-0929">Antimicrobial</keyword>
<keyword id="KW-0903">Direct protein sequencing</keyword>
<keyword id="KW-0295">Fungicide</keyword>
<keyword id="KW-0391">Immunity</keyword>
<keyword id="KW-0399">Innate immunity</keyword>
<keyword id="KW-0964">Secreted</keyword>